<comment type="function">
    <text evidence="1">Catalyzes the anti-1,4-elimination of the C-3 phosphate and the C-6 proR hydrogen from 5-enolpyruvylshikimate-3-phosphate (EPSP) to yield chorismate, which is the branch point compound that serves as the starting substrate for the three terminal pathways of aromatic amino acid biosynthesis. This reaction introduces a second double bond into the aromatic ring system.</text>
</comment>
<comment type="catalytic activity">
    <reaction evidence="1">
        <text>5-O-(1-carboxyvinyl)-3-phosphoshikimate = chorismate + phosphate</text>
        <dbReference type="Rhea" id="RHEA:21020"/>
        <dbReference type="ChEBI" id="CHEBI:29748"/>
        <dbReference type="ChEBI" id="CHEBI:43474"/>
        <dbReference type="ChEBI" id="CHEBI:57701"/>
        <dbReference type="EC" id="4.2.3.5"/>
    </reaction>
</comment>
<comment type="cofactor">
    <cofactor evidence="1">
        <name>FMNH2</name>
        <dbReference type="ChEBI" id="CHEBI:57618"/>
    </cofactor>
    <text evidence="1">Reduced FMN (FMNH(2)).</text>
</comment>
<comment type="pathway">
    <text evidence="1">Metabolic intermediate biosynthesis; chorismate biosynthesis; chorismate from D-erythrose 4-phosphate and phosphoenolpyruvate: step 7/7.</text>
</comment>
<comment type="subunit">
    <text evidence="1">Homotetramer.</text>
</comment>
<comment type="similarity">
    <text evidence="1">Belongs to the chorismate synthase family.</text>
</comment>
<dbReference type="EC" id="4.2.3.5" evidence="1"/>
<dbReference type="EMBL" id="AM889285">
    <property type="protein sequence ID" value="CAP57173.1"/>
    <property type="molecule type" value="Genomic_DNA"/>
</dbReference>
<dbReference type="EMBL" id="CP001189">
    <property type="protein sequence ID" value="ACI52862.1"/>
    <property type="molecule type" value="Genomic_DNA"/>
</dbReference>
<dbReference type="RefSeq" id="WP_012227664.1">
    <property type="nucleotide sequence ID" value="NC_010125.1"/>
</dbReference>
<dbReference type="SMR" id="A9H0U2"/>
<dbReference type="STRING" id="272568.GDI3230"/>
<dbReference type="KEGG" id="gdi:GDI3230"/>
<dbReference type="KEGG" id="gdj:Gdia_3132"/>
<dbReference type="eggNOG" id="COG0082">
    <property type="taxonomic scope" value="Bacteria"/>
</dbReference>
<dbReference type="HOGENOM" id="CLU_034547_0_0_5"/>
<dbReference type="OrthoDB" id="9771806at2"/>
<dbReference type="UniPathway" id="UPA00053">
    <property type="reaction ID" value="UER00090"/>
</dbReference>
<dbReference type="Proteomes" id="UP000001176">
    <property type="component" value="Chromosome"/>
</dbReference>
<dbReference type="GO" id="GO:0005829">
    <property type="term" value="C:cytosol"/>
    <property type="evidence" value="ECO:0007669"/>
    <property type="project" value="TreeGrafter"/>
</dbReference>
<dbReference type="GO" id="GO:0004107">
    <property type="term" value="F:chorismate synthase activity"/>
    <property type="evidence" value="ECO:0007669"/>
    <property type="project" value="UniProtKB-UniRule"/>
</dbReference>
<dbReference type="GO" id="GO:0010181">
    <property type="term" value="F:FMN binding"/>
    <property type="evidence" value="ECO:0007669"/>
    <property type="project" value="TreeGrafter"/>
</dbReference>
<dbReference type="GO" id="GO:0008652">
    <property type="term" value="P:amino acid biosynthetic process"/>
    <property type="evidence" value="ECO:0007669"/>
    <property type="project" value="UniProtKB-KW"/>
</dbReference>
<dbReference type="GO" id="GO:0009073">
    <property type="term" value="P:aromatic amino acid family biosynthetic process"/>
    <property type="evidence" value="ECO:0007669"/>
    <property type="project" value="UniProtKB-KW"/>
</dbReference>
<dbReference type="GO" id="GO:0009423">
    <property type="term" value="P:chorismate biosynthetic process"/>
    <property type="evidence" value="ECO:0007669"/>
    <property type="project" value="UniProtKB-UniRule"/>
</dbReference>
<dbReference type="CDD" id="cd07304">
    <property type="entry name" value="Chorismate_synthase"/>
    <property type="match status" value="1"/>
</dbReference>
<dbReference type="Gene3D" id="3.60.150.10">
    <property type="entry name" value="Chorismate synthase AroC"/>
    <property type="match status" value="1"/>
</dbReference>
<dbReference type="HAMAP" id="MF_00300">
    <property type="entry name" value="Chorismate_synth"/>
    <property type="match status" value="1"/>
</dbReference>
<dbReference type="InterPro" id="IPR000453">
    <property type="entry name" value="Chorismate_synth"/>
</dbReference>
<dbReference type="InterPro" id="IPR035904">
    <property type="entry name" value="Chorismate_synth_AroC_sf"/>
</dbReference>
<dbReference type="InterPro" id="IPR020541">
    <property type="entry name" value="Chorismate_synthase_CS"/>
</dbReference>
<dbReference type="NCBIfam" id="TIGR00033">
    <property type="entry name" value="aroC"/>
    <property type="match status" value="1"/>
</dbReference>
<dbReference type="NCBIfam" id="NF003793">
    <property type="entry name" value="PRK05382.1"/>
    <property type="match status" value="1"/>
</dbReference>
<dbReference type="PANTHER" id="PTHR21085">
    <property type="entry name" value="CHORISMATE SYNTHASE"/>
    <property type="match status" value="1"/>
</dbReference>
<dbReference type="PANTHER" id="PTHR21085:SF0">
    <property type="entry name" value="CHORISMATE SYNTHASE"/>
    <property type="match status" value="1"/>
</dbReference>
<dbReference type="Pfam" id="PF01264">
    <property type="entry name" value="Chorismate_synt"/>
    <property type="match status" value="1"/>
</dbReference>
<dbReference type="PIRSF" id="PIRSF001456">
    <property type="entry name" value="Chorismate_synth"/>
    <property type="match status" value="1"/>
</dbReference>
<dbReference type="SUPFAM" id="SSF103263">
    <property type="entry name" value="Chorismate synthase, AroC"/>
    <property type="match status" value="1"/>
</dbReference>
<dbReference type="PROSITE" id="PS00787">
    <property type="entry name" value="CHORISMATE_SYNTHASE_1"/>
    <property type="match status" value="1"/>
</dbReference>
<dbReference type="PROSITE" id="PS00788">
    <property type="entry name" value="CHORISMATE_SYNTHASE_2"/>
    <property type="match status" value="1"/>
</dbReference>
<dbReference type="PROSITE" id="PS00789">
    <property type="entry name" value="CHORISMATE_SYNTHASE_3"/>
    <property type="match status" value="1"/>
</dbReference>
<name>AROC_GLUDA</name>
<reference key="1">
    <citation type="journal article" date="2009" name="BMC Genomics">
        <title>Complete genome sequence of the sugarcane nitrogen-fixing endophyte Gluconacetobacter diazotrophicus Pal5.</title>
        <authorList>
            <person name="Bertalan M."/>
            <person name="Albano R."/>
            <person name="de Padua V."/>
            <person name="Rouws L."/>
            <person name="Rojas C."/>
            <person name="Hemerly A."/>
            <person name="Teixeira K."/>
            <person name="Schwab S."/>
            <person name="Araujo J."/>
            <person name="Oliveira A."/>
            <person name="Franca L."/>
            <person name="Magalhaes V."/>
            <person name="Alqueres S."/>
            <person name="Cardoso A."/>
            <person name="Almeida W."/>
            <person name="Loureiro M.M."/>
            <person name="Nogueira E."/>
            <person name="Cidade D."/>
            <person name="Oliveira D."/>
            <person name="Simao T."/>
            <person name="Macedo J."/>
            <person name="Valadao A."/>
            <person name="Dreschsel M."/>
            <person name="Freitas F."/>
            <person name="Vidal M."/>
            <person name="Guedes H."/>
            <person name="Rodrigues E."/>
            <person name="Meneses C."/>
            <person name="Brioso P."/>
            <person name="Pozzer L."/>
            <person name="Figueiredo D."/>
            <person name="Montano H."/>
            <person name="Junior J."/>
            <person name="de Souza Filho G."/>
            <person name="Martin Quintana Flores V."/>
            <person name="Ferreira B."/>
            <person name="Branco A."/>
            <person name="Gonzalez P."/>
            <person name="Guillobel H."/>
            <person name="Lemos M."/>
            <person name="Seibel L."/>
            <person name="Macedo J."/>
            <person name="Alves-Ferreira M."/>
            <person name="Sachetto-Martins G."/>
            <person name="Coelho A."/>
            <person name="Santos E."/>
            <person name="Amaral G."/>
            <person name="Neves A."/>
            <person name="Pacheco A.B."/>
            <person name="Carvalho D."/>
            <person name="Lery L."/>
            <person name="Bisch P."/>
            <person name="Rossle S.C."/>
            <person name="Urmenyi T."/>
            <person name="Rael Pereira A."/>
            <person name="Silva R."/>
            <person name="Rondinelli E."/>
            <person name="von Kruger W."/>
            <person name="Martins O."/>
            <person name="Baldani J.I."/>
            <person name="Ferreira P.C."/>
        </authorList>
    </citation>
    <scope>NUCLEOTIDE SEQUENCE [LARGE SCALE GENOMIC DNA]</scope>
    <source>
        <strain>ATCC 49037 / DSM 5601 / CCUG 37298 / CIP 103539 / LMG 7603 / PAl5</strain>
    </source>
</reference>
<reference key="2">
    <citation type="journal article" date="2010" name="Stand. Genomic Sci.">
        <title>Two genome sequences of the same bacterial strain, Gluconacetobacter diazotrophicus PAl 5, suggest a new standard in genome sequence submission.</title>
        <authorList>
            <person name="Giongo A."/>
            <person name="Tyler H.L."/>
            <person name="Zipperer U.N."/>
            <person name="Triplett E.W."/>
        </authorList>
    </citation>
    <scope>NUCLEOTIDE SEQUENCE [LARGE SCALE GENOMIC DNA]</scope>
    <source>
        <strain>ATCC 49037 / DSM 5601 / CCUG 37298 / CIP 103539 / LMG 7603 / PAl5</strain>
    </source>
</reference>
<accession>A9H0U2</accession>
<accession>B5ZJR0</accession>
<organism>
    <name type="scientific">Gluconacetobacter diazotrophicus (strain ATCC 49037 / DSM 5601 / CCUG 37298 / CIP 103539 / LMG 7603 / PAl5)</name>
    <dbReference type="NCBI Taxonomy" id="272568"/>
    <lineage>
        <taxon>Bacteria</taxon>
        <taxon>Pseudomonadati</taxon>
        <taxon>Pseudomonadota</taxon>
        <taxon>Alphaproteobacteria</taxon>
        <taxon>Acetobacterales</taxon>
        <taxon>Acetobacteraceae</taxon>
        <taxon>Gluconacetobacter</taxon>
    </lineage>
</organism>
<sequence>MSHNSFGHLFRVTTWGESHGPAIGCVVDGCPPRLPLSEADIQPWLDRRRPGQSKFTTQRQEPDAVEILSGVFEGQTTGTPISLLIRNTDQRSRDYGDIAERYRPGHADVAYDLKYGIRDYRGGGRSSARETAMRVAAGAVARRVLGEGVRIRGALTQIGAHRVDRARWDWDAVDTNPFFCPDPAMVPVWEEYLGAVRKAGSSIGAVIEIVAEGVPAGWGAPVYGKLDSDLAMALMSINAVKGIEIGDGFAAAELTGEENADPMRMVDGRLTFGANHAGGVLGGISTGQPLVARFAVKPTSSILAPVDSVTRGGENVEVSTRGRHDPCVGIRAVPVGEAMMACVLADHFLRHRAQVGP</sequence>
<gene>
    <name evidence="1" type="primary">aroC</name>
    <name type="ordered locus">GDI3230</name>
    <name type="ordered locus">Gdia_3132</name>
</gene>
<keyword id="KW-0028">Amino-acid biosynthesis</keyword>
<keyword id="KW-0057">Aromatic amino acid biosynthesis</keyword>
<keyword id="KW-0274">FAD</keyword>
<keyword id="KW-0285">Flavoprotein</keyword>
<keyword id="KW-0288">FMN</keyword>
<keyword id="KW-0456">Lyase</keyword>
<keyword id="KW-0521">NADP</keyword>
<keyword id="KW-1185">Reference proteome</keyword>
<feature type="chain" id="PRO_1000078996" description="Chorismate synthase">
    <location>
        <begin position="1"/>
        <end position="357"/>
    </location>
</feature>
<feature type="binding site" evidence="1">
    <location>
        <position position="48"/>
    </location>
    <ligand>
        <name>NADP(+)</name>
        <dbReference type="ChEBI" id="CHEBI:58349"/>
    </ligand>
</feature>
<feature type="binding site" evidence="1">
    <location>
        <begin position="125"/>
        <end position="127"/>
    </location>
    <ligand>
        <name>FMN</name>
        <dbReference type="ChEBI" id="CHEBI:58210"/>
    </ligand>
</feature>
<feature type="binding site" evidence="1">
    <location>
        <begin position="238"/>
        <end position="239"/>
    </location>
    <ligand>
        <name>FMN</name>
        <dbReference type="ChEBI" id="CHEBI:58210"/>
    </ligand>
</feature>
<feature type="binding site" evidence="1">
    <location>
        <position position="282"/>
    </location>
    <ligand>
        <name>FMN</name>
        <dbReference type="ChEBI" id="CHEBI:58210"/>
    </ligand>
</feature>
<feature type="binding site" evidence="1">
    <location>
        <begin position="297"/>
        <end position="301"/>
    </location>
    <ligand>
        <name>FMN</name>
        <dbReference type="ChEBI" id="CHEBI:58210"/>
    </ligand>
</feature>
<feature type="binding site" evidence="1">
    <location>
        <position position="323"/>
    </location>
    <ligand>
        <name>FMN</name>
        <dbReference type="ChEBI" id="CHEBI:58210"/>
    </ligand>
</feature>
<protein>
    <recommendedName>
        <fullName evidence="1">Chorismate synthase</fullName>
        <shortName evidence="1">CS</shortName>
        <ecNumber evidence="1">4.2.3.5</ecNumber>
    </recommendedName>
    <alternativeName>
        <fullName evidence="1">5-enolpyruvylshikimate-3-phosphate phospholyase</fullName>
    </alternativeName>
</protein>
<evidence type="ECO:0000255" key="1">
    <source>
        <dbReference type="HAMAP-Rule" id="MF_00300"/>
    </source>
</evidence>
<proteinExistence type="inferred from homology"/>